<keyword id="KW-0067">ATP-binding</keyword>
<keyword id="KW-0227">DNA damage</keyword>
<keyword id="KW-0234">DNA repair</keyword>
<keyword id="KW-0238">DNA-binding</keyword>
<keyword id="KW-0378">Hydrolase</keyword>
<keyword id="KW-0479">Metal-binding</keyword>
<keyword id="KW-0547">Nucleotide-binding</keyword>
<keyword id="KW-0346">Stress response</keyword>
<keyword id="KW-0862">Zinc</keyword>
<keyword id="KW-0863">Zinc-finger</keyword>
<proteinExistence type="inferred from homology"/>
<comment type="function">
    <text evidence="1">DNA-dependent ATPase involved in processing of recombination intermediates, plays a role in repairing DNA breaks. Stimulates the branch migration of RecA-mediated strand transfer reactions, allowing the 3' invading strand to extend heteroduplex DNA faster. Binds ssDNA in the presence of ADP but not other nucleotides, has ATPase activity that is stimulated by ssDNA and various branched DNA structures, but inhibited by SSB. Does not have RecA's homology-searching function.</text>
</comment>
<comment type="domain">
    <text evidence="1">Has a putative N-terminal zinc-finger, a middle region with homology to RecA with ATPase motifs including the RadA KNRFG motif, while the C-terminus is homologous to Lon protease.</text>
</comment>
<comment type="similarity">
    <text evidence="1">Belongs to the RecA family. RadA subfamily.</text>
</comment>
<feature type="chain" id="PRO_0000187940" description="DNA repair protein RadA">
    <location>
        <begin position="1"/>
        <end position="453"/>
    </location>
</feature>
<feature type="zinc finger region" description="C4-type" evidence="1">
    <location>
        <begin position="10"/>
        <end position="27"/>
    </location>
</feature>
<feature type="region of interest" description="Lon-protease-like" evidence="1">
    <location>
        <begin position="350"/>
        <end position="453"/>
    </location>
</feature>
<feature type="short sequence motif" description="RadA KNRFG motif" evidence="1">
    <location>
        <begin position="251"/>
        <end position="255"/>
    </location>
</feature>
<feature type="binding site" evidence="1">
    <location>
        <begin position="95"/>
        <end position="102"/>
    </location>
    <ligand>
        <name>ATP</name>
        <dbReference type="ChEBI" id="CHEBI:30616"/>
    </ligand>
</feature>
<dbReference type="EC" id="3.6.4.-" evidence="1"/>
<dbReference type="EMBL" id="CP000003">
    <property type="protein sequence ID" value="AAT86366.1"/>
    <property type="molecule type" value="Genomic_DNA"/>
</dbReference>
<dbReference type="RefSeq" id="WP_002986109.1">
    <property type="nucleotide sequence ID" value="NC_006086.1"/>
</dbReference>
<dbReference type="SMR" id="Q5XDZ7"/>
<dbReference type="MEROPS" id="S16.A04"/>
<dbReference type="KEGG" id="spa:M6_Spy0231"/>
<dbReference type="HOGENOM" id="CLU_018264_0_1_9"/>
<dbReference type="Proteomes" id="UP000001167">
    <property type="component" value="Chromosome"/>
</dbReference>
<dbReference type="GO" id="GO:0005829">
    <property type="term" value="C:cytosol"/>
    <property type="evidence" value="ECO:0007669"/>
    <property type="project" value="TreeGrafter"/>
</dbReference>
<dbReference type="GO" id="GO:0005524">
    <property type="term" value="F:ATP binding"/>
    <property type="evidence" value="ECO:0007669"/>
    <property type="project" value="UniProtKB-UniRule"/>
</dbReference>
<dbReference type="GO" id="GO:0016887">
    <property type="term" value="F:ATP hydrolysis activity"/>
    <property type="evidence" value="ECO:0007669"/>
    <property type="project" value="InterPro"/>
</dbReference>
<dbReference type="GO" id="GO:0140664">
    <property type="term" value="F:ATP-dependent DNA damage sensor activity"/>
    <property type="evidence" value="ECO:0007669"/>
    <property type="project" value="InterPro"/>
</dbReference>
<dbReference type="GO" id="GO:0003684">
    <property type="term" value="F:damaged DNA binding"/>
    <property type="evidence" value="ECO:0007669"/>
    <property type="project" value="InterPro"/>
</dbReference>
<dbReference type="GO" id="GO:0008270">
    <property type="term" value="F:zinc ion binding"/>
    <property type="evidence" value="ECO:0007669"/>
    <property type="project" value="UniProtKB-KW"/>
</dbReference>
<dbReference type="GO" id="GO:0000725">
    <property type="term" value="P:recombinational repair"/>
    <property type="evidence" value="ECO:0007669"/>
    <property type="project" value="UniProtKB-UniRule"/>
</dbReference>
<dbReference type="CDD" id="cd01121">
    <property type="entry name" value="RadA_SMS_N"/>
    <property type="match status" value="1"/>
</dbReference>
<dbReference type="FunFam" id="3.30.230.10:FF:000031">
    <property type="entry name" value="DNA repair protein RadA"/>
    <property type="match status" value="1"/>
</dbReference>
<dbReference type="FunFam" id="3.40.50.300:FF:000050">
    <property type="entry name" value="DNA repair protein RadA"/>
    <property type="match status" value="1"/>
</dbReference>
<dbReference type="Gene3D" id="3.30.230.10">
    <property type="match status" value="1"/>
</dbReference>
<dbReference type="Gene3D" id="3.40.50.300">
    <property type="entry name" value="P-loop containing nucleotide triphosphate hydrolases"/>
    <property type="match status" value="1"/>
</dbReference>
<dbReference type="HAMAP" id="MF_01498">
    <property type="entry name" value="RadA_bact"/>
    <property type="match status" value="1"/>
</dbReference>
<dbReference type="InterPro" id="IPR003593">
    <property type="entry name" value="AAA+_ATPase"/>
</dbReference>
<dbReference type="InterPro" id="IPR004504">
    <property type="entry name" value="DNA_repair_RadA"/>
</dbReference>
<dbReference type="InterPro" id="IPR027417">
    <property type="entry name" value="P-loop_NTPase"/>
</dbReference>
<dbReference type="InterPro" id="IPR020588">
    <property type="entry name" value="RecA_ATP-bd"/>
</dbReference>
<dbReference type="InterPro" id="IPR020568">
    <property type="entry name" value="Ribosomal_Su5_D2-typ_SF"/>
</dbReference>
<dbReference type="InterPro" id="IPR014721">
    <property type="entry name" value="Ribsml_uS5_D2-typ_fold_subgr"/>
</dbReference>
<dbReference type="InterPro" id="IPR041166">
    <property type="entry name" value="Rubredoxin_2"/>
</dbReference>
<dbReference type="NCBIfam" id="TIGR00416">
    <property type="entry name" value="sms"/>
    <property type="match status" value="1"/>
</dbReference>
<dbReference type="PANTHER" id="PTHR32472">
    <property type="entry name" value="DNA REPAIR PROTEIN RADA"/>
    <property type="match status" value="1"/>
</dbReference>
<dbReference type="PANTHER" id="PTHR32472:SF10">
    <property type="entry name" value="DNA REPAIR PROTEIN RADA-LIKE PROTEIN"/>
    <property type="match status" value="1"/>
</dbReference>
<dbReference type="Pfam" id="PF13481">
    <property type="entry name" value="AAA_25"/>
    <property type="match status" value="1"/>
</dbReference>
<dbReference type="Pfam" id="PF13541">
    <property type="entry name" value="ChlI"/>
    <property type="match status" value="1"/>
</dbReference>
<dbReference type="Pfam" id="PF18073">
    <property type="entry name" value="Zn_ribbon_LapB"/>
    <property type="match status" value="1"/>
</dbReference>
<dbReference type="PRINTS" id="PR01874">
    <property type="entry name" value="DNAREPAIRADA"/>
</dbReference>
<dbReference type="SMART" id="SM00382">
    <property type="entry name" value="AAA"/>
    <property type="match status" value="1"/>
</dbReference>
<dbReference type="SUPFAM" id="SSF52540">
    <property type="entry name" value="P-loop containing nucleoside triphosphate hydrolases"/>
    <property type="match status" value="1"/>
</dbReference>
<dbReference type="SUPFAM" id="SSF54211">
    <property type="entry name" value="Ribosomal protein S5 domain 2-like"/>
    <property type="match status" value="1"/>
</dbReference>
<dbReference type="PROSITE" id="PS50162">
    <property type="entry name" value="RECA_2"/>
    <property type="match status" value="1"/>
</dbReference>
<accession>Q5XDZ7</accession>
<organism>
    <name type="scientific">Streptococcus pyogenes serotype M6 (strain ATCC BAA-946 / MGAS10394)</name>
    <dbReference type="NCBI Taxonomy" id="286636"/>
    <lineage>
        <taxon>Bacteria</taxon>
        <taxon>Bacillati</taxon>
        <taxon>Bacillota</taxon>
        <taxon>Bacilli</taxon>
        <taxon>Lactobacillales</taxon>
        <taxon>Streptococcaceae</taxon>
        <taxon>Streptococcus</taxon>
    </lineage>
</organism>
<reference key="1">
    <citation type="journal article" date="2004" name="J. Infect. Dis.">
        <title>Progress toward characterization of the group A Streptococcus metagenome: complete genome sequence of a macrolide-resistant serotype M6 strain.</title>
        <authorList>
            <person name="Banks D.J."/>
            <person name="Porcella S.F."/>
            <person name="Barbian K.D."/>
            <person name="Beres S.B."/>
            <person name="Philips L.E."/>
            <person name="Voyich J.M."/>
            <person name="DeLeo F.R."/>
            <person name="Martin J.M."/>
            <person name="Somerville G.A."/>
            <person name="Musser J.M."/>
        </authorList>
    </citation>
    <scope>NUCLEOTIDE SEQUENCE [LARGE SCALE GENOMIC DNA]</scope>
    <source>
        <strain>ATCC BAA-946 / MGAS10394</strain>
    </source>
</reference>
<sequence length="453" mass="49387">MAKKKATFICQECGYQSPKYLGRCPNCSAWSSFVEEVEVKEVKNARVSLAGEKSRPVKLKDVDNISYHRTQTDMSEFNRVLGGGVVPGSLILIGGDPGIGKSTLLLQVSTQLANKGTVLYVSGEESAEQIKLRSERLGDIDNEFYLYAETNMQAIRTEIENIKPDFLIIDSIQTIMSPDITGVQGSVSQVREVTAELMQLAKTNNIATFIVGHVTKEGTLAGPRMLEHMVDTVLYFEGERHHTFRILRAVKNRFGSTNEIGIFEMQSGGLVEVLNPSQVFLEERLDGATGSAVVVTMEGSRPILAEVQSLVTPTVFGNARRTTTGLDFNRVSLIMAVLEKRCGLLLQNQDAYLKSAGGVKLDEPAIDLAVAVAIASSYKEKPTSPQEAFLGEIGLTGEIRRVTRIEQRINEAAKLGFTKVYAPKNALQGIDIPQGIEVVGVTTVGQVLKAVFS</sequence>
<evidence type="ECO:0000255" key="1">
    <source>
        <dbReference type="HAMAP-Rule" id="MF_01498"/>
    </source>
</evidence>
<name>RADA_STRP6</name>
<gene>
    <name evidence="1" type="primary">radA</name>
    <name type="ordered locus">M6_Spy0231</name>
</gene>
<protein>
    <recommendedName>
        <fullName evidence="1">DNA repair protein RadA</fullName>
        <ecNumber evidence="1">3.6.4.-</ecNumber>
    </recommendedName>
    <alternativeName>
        <fullName evidence="1">Branch migration protein RadA</fullName>
    </alternativeName>
</protein>